<sequence>MTWRSEHIWIELITGSRKISNFCWAFILFLGSLGFLLVGTSSYLGRNLISFFPPQQIIFFPQGLVMSFYGIAGLFISSYLWCTISWNVGSGYDRFDRKEGIVCIFRWGFPGKNRRIFLRFLIKDIQSVRIEVKEGISARRVLYMDIRGQGSIPLTRTDENLTPREIEQKAAELAYFLRVPIEVF</sequence>
<accession>Q3C1J0</accession>
<dbReference type="EMBL" id="AB237912">
    <property type="protein sequence ID" value="BAE46663.1"/>
    <property type="molecule type" value="Genomic_DNA"/>
</dbReference>
<dbReference type="RefSeq" id="YP_358688.1">
    <property type="nucleotide sequence ID" value="NC_007500.1"/>
</dbReference>
<dbReference type="GeneID" id="3735129"/>
<dbReference type="KEGG" id="nsy:3735129"/>
<dbReference type="eggNOG" id="KOG0017">
    <property type="taxonomic scope" value="Eukaryota"/>
</dbReference>
<dbReference type="OrthoDB" id="25400at4085"/>
<dbReference type="Proteomes" id="UP000189701">
    <property type="component" value="Chloroplast Pltd"/>
</dbReference>
<dbReference type="GO" id="GO:0009535">
    <property type="term" value="C:chloroplast thylakoid membrane"/>
    <property type="evidence" value="ECO:0007669"/>
    <property type="project" value="UniProtKB-SubCell"/>
</dbReference>
<dbReference type="GO" id="GO:0009522">
    <property type="term" value="C:photosystem I"/>
    <property type="evidence" value="ECO:0007669"/>
    <property type="project" value="InterPro"/>
</dbReference>
<dbReference type="GO" id="GO:0015979">
    <property type="term" value="P:photosynthesis"/>
    <property type="evidence" value="ECO:0007669"/>
    <property type="project" value="UniProtKB-UniRule"/>
</dbReference>
<dbReference type="HAMAP" id="MF_00437">
    <property type="entry name" value="Ycf4"/>
    <property type="match status" value="1"/>
</dbReference>
<dbReference type="InterPro" id="IPR003359">
    <property type="entry name" value="PSI_Ycf4_assembly"/>
</dbReference>
<dbReference type="NCBIfam" id="NF002712">
    <property type="entry name" value="PRK02542.1"/>
    <property type="match status" value="1"/>
</dbReference>
<dbReference type="PANTHER" id="PTHR33288">
    <property type="match status" value="1"/>
</dbReference>
<dbReference type="PANTHER" id="PTHR33288:SF4">
    <property type="entry name" value="PHOTOSYSTEM I ASSEMBLY PROTEIN YCF4"/>
    <property type="match status" value="1"/>
</dbReference>
<dbReference type="Pfam" id="PF02392">
    <property type="entry name" value="Ycf4"/>
    <property type="match status" value="1"/>
</dbReference>
<organism>
    <name type="scientific">Nicotiana sylvestris</name>
    <name type="common">Wood tobacco</name>
    <name type="synonym">South American tobacco</name>
    <dbReference type="NCBI Taxonomy" id="4096"/>
    <lineage>
        <taxon>Eukaryota</taxon>
        <taxon>Viridiplantae</taxon>
        <taxon>Streptophyta</taxon>
        <taxon>Embryophyta</taxon>
        <taxon>Tracheophyta</taxon>
        <taxon>Spermatophyta</taxon>
        <taxon>Magnoliopsida</taxon>
        <taxon>eudicotyledons</taxon>
        <taxon>Gunneridae</taxon>
        <taxon>Pentapetalae</taxon>
        <taxon>asterids</taxon>
        <taxon>lamiids</taxon>
        <taxon>Solanales</taxon>
        <taxon>Solanaceae</taxon>
        <taxon>Nicotianoideae</taxon>
        <taxon>Nicotianeae</taxon>
        <taxon>Nicotiana</taxon>
    </lineage>
</organism>
<proteinExistence type="inferred from homology"/>
<name>YCF4_NICSY</name>
<protein>
    <recommendedName>
        <fullName evidence="1">Photosystem I assembly protein Ycf4</fullName>
    </recommendedName>
</protein>
<geneLocation type="chloroplast"/>
<gene>
    <name evidence="1" type="primary">ycf4</name>
</gene>
<evidence type="ECO:0000255" key="1">
    <source>
        <dbReference type="HAMAP-Rule" id="MF_00437"/>
    </source>
</evidence>
<reference key="1">
    <citation type="journal article" date="2006" name="Mol. Genet. Genomics">
        <title>The chloroplast genome of Nicotiana sylvestris and Nicotiana tomentosiformis: complete sequencing confirms that the Nicotiana sylvestris progenitor is the maternal genome donor of Nicotiana tabacum.</title>
        <authorList>
            <person name="Yukawa M."/>
            <person name="Tsudzuki T."/>
            <person name="Sugiura M."/>
        </authorList>
    </citation>
    <scope>NUCLEOTIDE SEQUENCE [LARGE SCALE GENOMIC DNA]</scope>
</reference>
<comment type="function">
    <text evidence="1">Seems to be required for the assembly of the photosystem I complex.</text>
</comment>
<comment type="subcellular location">
    <subcellularLocation>
        <location evidence="1">Plastid</location>
        <location evidence="1">Chloroplast thylakoid membrane</location>
        <topology evidence="1">Multi-pass membrane protein</topology>
    </subcellularLocation>
</comment>
<comment type="similarity">
    <text evidence="1">Belongs to the Ycf4 family.</text>
</comment>
<keyword id="KW-0150">Chloroplast</keyword>
<keyword id="KW-0472">Membrane</keyword>
<keyword id="KW-0602">Photosynthesis</keyword>
<keyword id="KW-0934">Plastid</keyword>
<keyword id="KW-1185">Reference proteome</keyword>
<keyword id="KW-0793">Thylakoid</keyword>
<keyword id="KW-0812">Transmembrane</keyword>
<keyword id="KW-1133">Transmembrane helix</keyword>
<feature type="chain" id="PRO_0000275662" description="Photosystem I assembly protein Ycf4">
    <location>
        <begin position="1"/>
        <end position="184"/>
    </location>
</feature>
<feature type="transmembrane region" description="Helical" evidence="1">
    <location>
        <begin position="19"/>
        <end position="39"/>
    </location>
</feature>
<feature type="transmembrane region" description="Helical" evidence="1">
    <location>
        <begin position="57"/>
        <end position="77"/>
    </location>
</feature>